<reference key="1">
    <citation type="journal article" date="2011" name="Nat. Commun.">
        <title>Effector diversification within compartments of the Leptosphaeria maculans genome affected by Repeat-Induced Point mutations.</title>
        <authorList>
            <person name="Rouxel T."/>
            <person name="Grandaubert J."/>
            <person name="Hane J.K."/>
            <person name="Hoede C."/>
            <person name="van de Wouw A.P."/>
            <person name="Couloux A."/>
            <person name="Dominguez V."/>
            <person name="Anthouard V."/>
            <person name="Bally P."/>
            <person name="Bourras S."/>
            <person name="Cozijnsen A.J."/>
            <person name="Ciuffetti L.M."/>
            <person name="Degrave A."/>
            <person name="Dilmaghani A."/>
            <person name="Duret L."/>
            <person name="Fudal I."/>
            <person name="Goodwin S.B."/>
            <person name="Gout L."/>
            <person name="Glaser N."/>
            <person name="Linglin J."/>
            <person name="Kema G.H.J."/>
            <person name="Lapalu N."/>
            <person name="Lawrence C.B."/>
            <person name="May K."/>
            <person name="Meyer M."/>
            <person name="Ollivier B."/>
            <person name="Poulain J."/>
            <person name="Schoch C.L."/>
            <person name="Simon A."/>
            <person name="Spatafora J.W."/>
            <person name="Stachowiak A."/>
            <person name="Turgeon B.G."/>
            <person name="Tyler B.M."/>
            <person name="Vincent D."/>
            <person name="Weissenbach J."/>
            <person name="Amselem J."/>
            <person name="Quesneville H."/>
            <person name="Oliver R.P."/>
            <person name="Wincker P."/>
            <person name="Balesdent M.-H."/>
            <person name="Howlett B.J."/>
        </authorList>
    </citation>
    <scope>NUCLEOTIDE SEQUENCE [LARGE SCALE GENOMIC DNA]</scope>
    <source>
        <strain>JN3 / isolate v23.1.3 / race Av1-4-5-6-7-8</strain>
    </source>
</reference>
<evidence type="ECO:0000250" key="1"/>
<evidence type="ECO:0000255" key="2"/>
<evidence type="ECO:0000256" key="3">
    <source>
        <dbReference type="SAM" id="MobiDB-lite"/>
    </source>
</evidence>
<evidence type="ECO:0000305" key="4"/>
<keyword id="KW-0325">Glycoprotein</keyword>
<keyword id="KW-0333">Golgi apparatus</keyword>
<keyword id="KW-0472">Membrane</keyword>
<keyword id="KW-0653">Protein transport</keyword>
<keyword id="KW-0675">Receptor</keyword>
<keyword id="KW-1185">Reference proteome</keyword>
<keyword id="KW-0677">Repeat</keyword>
<keyword id="KW-0732">Signal</keyword>
<keyword id="KW-0812">Transmembrane</keyword>
<keyword id="KW-1133">Transmembrane helix</keyword>
<keyword id="KW-0813">Transport</keyword>
<gene>
    <name type="primary">VPS10</name>
    <name type="ORF">Lema_P028990.1</name>
</gene>
<dbReference type="EMBL" id="FP929127">
    <property type="protein sequence ID" value="CBX95747.1"/>
    <property type="status" value="ALT_SEQ"/>
    <property type="molecule type" value="Genomic_DNA"/>
</dbReference>
<dbReference type="RefSeq" id="XP_003839226.1">
    <property type="nucleotide sequence ID" value="XM_003839178.1"/>
</dbReference>
<dbReference type="SMR" id="E4ZVX1"/>
<dbReference type="FunCoup" id="E4ZVX1">
    <property type="interactions" value="177"/>
</dbReference>
<dbReference type="STRING" id="985895.E4ZVX1"/>
<dbReference type="GlyCosmos" id="E4ZVX1">
    <property type="glycosylation" value="4 sites, No reported glycans"/>
</dbReference>
<dbReference type="GeneID" id="13288633"/>
<dbReference type="VEuPathDB" id="FungiDB:LEMA_P028990.1"/>
<dbReference type="eggNOG" id="KOG3511">
    <property type="taxonomic scope" value="Eukaryota"/>
</dbReference>
<dbReference type="InParanoid" id="E4ZVX1"/>
<dbReference type="OrthoDB" id="443634at2759"/>
<dbReference type="Proteomes" id="UP000002668">
    <property type="component" value="Genome"/>
</dbReference>
<dbReference type="GO" id="GO:0005829">
    <property type="term" value="C:cytosol"/>
    <property type="evidence" value="ECO:0007669"/>
    <property type="project" value="GOC"/>
</dbReference>
<dbReference type="GO" id="GO:0005794">
    <property type="term" value="C:Golgi apparatus"/>
    <property type="evidence" value="ECO:0007669"/>
    <property type="project" value="UniProtKB-SubCell"/>
</dbReference>
<dbReference type="GO" id="GO:0016020">
    <property type="term" value="C:membrane"/>
    <property type="evidence" value="ECO:0007669"/>
    <property type="project" value="UniProtKB-KW"/>
</dbReference>
<dbReference type="GO" id="GO:0006895">
    <property type="term" value="P:Golgi to endosome transport"/>
    <property type="evidence" value="ECO:0007669"/>
    <property type="project" value="TreeGrafter"/>
</dbReference>
<dbReference type="GO" id="GO:0006896">
    <property type="term" value="P:Golgi to vacuole transport"/>
    <property type="evidence" value="ECO:0007669"/>
    <property type="project" value="TreeGrafter"/>
</dbReference>
<dbReference type="GO" id="GO:0006623">
    <property type="term" value="P:protein targeting to vacuole"/>
    <property type="evidence" value="ECO:0007669"/>
    <property type="project" value="TreeGrafter"/>
</dbReference>
<dbReference type="FunFam" id="3.30.60.270:FF:000005">
    <property type="entry name" value="Sortilin"/>
    <property type="match status" value="1"/>
</dbReference>
<dbReference type="Gene3D" id="2.10.70.80">
    <property type="match status" value="2"/>
</dbReference>
<dbReference type="Gene3D" id="3.30.60.270">
    <property type="match status" value="2"/>
</dbReference>
<dbReference type="Gene3D" id="2.130.10.10">
    <property type="entry name" value="YVTN repeat-like/Quinoprotein amine dehydrogenase"/>
    <property type="match status" value="2"/>
</dbReference>
<dbReference type="InterPro" id="IPR036278">
    <property type="entry name" value="Sialidase_sf"/>
</dbReference>
<dbReference type="InterPro" id="IPR031777">
    <property type="entry name" value="Sortilin_C"/>
</dbReference>
<dbReference type="InterPro" id="IPR031778">
    <property type="entry name" value="Sortilin_N"/>
</dbReference>
<dbReference type="InterPro" id="IPR006581">
    <property type="entry name" value="VPS10"/>
</dbReference>
<dbReference type="InterPro" id="IPR050310">
    <property type="entry name" value="VPS10-sortilin"/>
</dbReference>
<dbReference type="InterPro" id="IPR015943">
    <property type="entry name" value="WD40/YVTN_repeat-like_dom_sf"/>
</dbReference>
<dbReference type="PANTHER" id="PTHR12106">
    <property type="entry name" value="SORTILIN RELATED"/>
    <property type="match status" value="1"/>
</dbReference>
<dbReference type="PANTHER" id="PTHR12106:SF27">
    <property type="entry name" value="SORTILIN-RELATED RECEPTOR"/>
    <property type="match status" value="1"/>
</dbReference>
<dbReference type="Pfam" id="PF15902">
    <property type="entry name" value="Sortilin-Vps10"/>
    <property type="match status" value="2"/>
</dbReference>
<dbReference type="Pfam" id="PF15901">
    <property type="entry name" value="Sortilin_C"/>
    <property type="match status" value="2"/>
</dbReference>
<dbReference type="SMART" id="SM00602">
    <property type="entry name" value="VPS10"/>
    <property type="match status" value="2"/>
</dbReference>
<dbReference type="SUPFAM" id="SSF110296">
    <property type="entry name" value="Oligoxyloglucan reducing end-specific cellobiohydrolase"/>
    <property type="match status" value="1"/>
</dbReference>
<dbReference type="SUPFAM" id="SSF50939">
    <property type="entry name" value="Sialidases"/>
    <property type="match status" value="1"/>
</dbReference>
<accession>E4ZVX1</accession>
<organism>
    <name type="scientific">Leptosphaeria maculans (strain JN3 / isolate v23.1.3 / race Av1-4-5-6-7-8)</name>
    <name type="common">Blackleg fungus</name>
    <name type="synonym">Phoma lingam</name>
    <dbReference type="NCBI Taxonomy" id="985895"/>
    <lineage>
        <taxon>Eukaryota</taxon>
        <taxon>Fungi</taxon>
        <taxon>Dikarya</taxon>
        <taxon>Ascomycota</taxon>
        <taxon>Pezizomycotina</taxon>
        <taxon>Dothideomycetes</taxon>
        <taxon>Pleosporomycetidae</taxon>
        <taxon>Pleosporales</taxon>
        <taxon>Pleosporineae</taxon>
        <taxon>Leptosphaeriaceae</taxon>
        <taxon>Plenodomus</taxon>
        <taxon>Plenodomus lingam/Leptosphaeria maculans species complex</taxon>
    </lineage>
</organism>
<proteinExistence type="inferred from homology"/>
<sequence length="1477" mass="167426">MKYLRGLLLPALLALAPSIAAKKDEPLIETTAFKNDLINLMYFDDSGVALVQEIENGNVWRSHDAGKGWSQIKDVSKVLRITKSPYDNKAAIVLGEKKHWITYDRGENWDSFETEFPPSPVAPVGWHASDNKKILVNEIEDCFLAPCLGRTYYTTDGFKSKPKVLVEDRRMCQWAKGSERFLEGEDKHDSRILCITRGKYSDRSKDFRLLISDNFFKDSEEPKMSSGRTVQGMTNMAAVKGYIVVASKPDHSNELSLYTTQDTETWHHAQFGDHKIEEDAYTILESTNYSIQVDVMTSKYVDMGNMYTSNSRGTYFTKNVEHTNRNQDGFVDFEKIANIQGVVLVNTVDNWKEYEKSGQNKKLKSRISFDDGRSFEKLTVKGKDDELHLHSVTNLHNSGRVFSSPAPGIVMGVGNTGEHLGKYTDGDLYVSDDAGLTWEMALSEAHKYEFGDQGSVLVAVFDEGDTDEIRYSFKHGRKDSWKKIKLDYKIRARELTTLPDATSLKFMMYASRKKEGGGREHVIIHLDFADMLPKCEDKDFDDKWSVRQETDGKPSCVMGHKQLFRRRKWDAECFIGDVFNDPVPTFEPCDCDEIRDYECDFGFDPSGEGKDKKCVPSDSRKLPEGACEGDAKTFKDKSGWRKIPGNQCKGETDREKEVERPCGDAEKQPPKSNKITSELTKFKGGNFQEYYYLERNAQADDDKPNDRDKDETVVMLTDERTAWITHDHGKKWKKAVDDEIVRIYPHQYENNYVYFLTATKKVYYSEDRGLHDSIHSFQAPTMPNTERLEIMRFHPNQKGWLIWMGGKNCEKVGDKDCHTVSYISQKNGQEESWEPMVPYVKKCVFIWREAGRKVKEEQVFCEQYTNEEMGAPLQLISSDDWFKKKEVKFKSVVEFATMAEFIVVATKADDGTLHLDATLDGSTFAEAKFPPKFFDVHQTAYTVLDSSTHAVFLHVTVNPQRDQEYGSIIKSNSNGTSYVMSLSGVNRNTEGYVDFEKMQGLEGVAVANIVANVDEVNNGTKKRKQSRITHNDGAAWEPLQAPEKDSEDQPYKCDVSDKEKCSLHIHGYTERADPREMYSSPTAVGMMLAVGNVGSELTTFGEASTFMTIDAGITWKEIKKGTYAWEFGDQGAIIAIVRRGEDTDHIYYSLDYGEKWNLYKFSEHKIRVDAITTVPSDTSLNFLLWGKDSKELVAVNIDFSGLPDFKRKCEIDEDNPTAGDFDLWSPQHPLQDGDQDCLFGHVAQYHRKKRGAQCKTQQRIDHMHNIARNCTCTRRDYECAYNYERKPGGECEKIPGLELADPKEVCSKGAKEWWDPSPYRKIPLSTCQGKEMDQIGEVHACPGFEEEFEKKHGLSGFGIFLAVVLPFLAAGGIGYYVWRNWDGKFGRIRLGENGGSFDSDAAWVKWPVAAVSGLVAVVTAIPLVMGSLWNFLASRMGGGYGGRTYTSRSSFARGRGDYAVVDPDEGELLGEESDEEV</sequence>
<protein>
    <recommendedName>
        <fullName>Vacuolar protein sorting/targeting protein 10</fullName>
    </recommendedName>
    <alternativeName>
        <fullName>Carboxypeptidase Y receptor</fullName>
        <shortName>CPY receptor</shortName>
    </alternativeName>
    <alternativeName>
        <fullName>Sortilin VPS10</fullName>
    </alternativeName>
    <alternativeName>
        <fullName>Vacuolar carboxypeptidase sorting receptor VPS10</fullName>
    </alternativeName>
</protein>
<name>VPS10_LEPMJ</name>
<comment type="function">
    <text evidence="1">Functions as a sorting receptor in the Golgi compartment required for the intracellular sorting and delivery of soluble vacuolar proteins, like carboxypeptidase Y (CPY) and proteinase A. Executes multiple rounds of sorting by cycling between the late Golgi and a prevacuolar endosome-like compartment (By similarity).</text>
</comment>
<comment type="subcellular location">
    <subcellularLocation>
        <location evidence="1">Golgi apparatus</location>
        <location evidence="1">trans-Golgi network membrane</location>
        <topology evidence="1">Multi-pass membrane protein</topology>
    </subcellularLocation>
    <subcellularLocation>
        <location evidence="1">Prevacuolar compartment membrane</location>
        <topology evidence="1">Multi-pass membrane protein</topology>
    </subcellularLocation>
    <text evidence="1">Cycles between the Golgi apparatus and the prevacuolar compartment.</text>
</comment>
<comment type="similarity">
    <text evidence="4">Belongs to the VPS10-related sortilin family.</text>
</comment>
<comment type="sequence caution" evidence="4">
    <conflict type="erroneous gene model prediction">
        <sequence resource="EMBL-CDS" id="CBX95747"/>
    </conflict>
</comment>
<feature type="signal peptide" evidence="2">
    <location>
        <begin position="1"/>
        <end position="21"/>
    </location>
</feature>
<feature type="chain" id="PRO_0000407521" description="Vacuolar protein sorting/targeting protein 10">
    <location>
        <begin position="22"/>
        <end position="1477"/>
    </location>
</feature>
<feature type="topological domain" description="Lumenal" evidence="2">
    <location>
        <begin position="22"/>
        <end position="1356"/>
    </location>
</feature>
<feature type="transmembrane region" description="Helical" evidence="2">
    <location>
        <begin position="1357"/>
        <end position="1377"/>
    </location>
</feature>
<feature type="topological domain" description="Cytoplasmic" evidence="2">
    <location>
        <begin position="1378"/>
        <end position="1405"/>
    </location>
</feature>
<feature type="transmembrane region" description="Helical" evidence="2">
    <location>
        <begin position="1406"/>
        <end position="1426"/>
    </location>
</feature>
<feature type="topological domain" description="Lumenal" evidence="2">
    <location>
        <begin position="1427"/>
        <end position="1477"/>
    </location>
</feature>
<feature type="repeat" description="BNR 1">
    <location>
        <begin position="100"/>
        <end position="110"/>
    </location>
</feature>
<feature type="repeat" description="BNR 2">
    <location>
        <begin position="367"/>
        <end position="377"/>
    </location>
</feature>
<feature type="repeat" description="BNR 3">
    <location>
        <begin position="429"/>
        <end position="439"/>
    </location>
</feature>
<feature type="repeat" description="BNR 4">
    <location>
        <begin position="723"/>
        <end position="734"/>
    </location>
</feature>
<feature type="repeat" description="BNR 5">
    <location>
        <begin position="1106"/>
        <end position="1116"/>
    </location>
</feature>
<feature type="repeat" description="BNR 6">
    <location>
        <begin position="1147"/>
        <end position="1157"/>
    </location>
</feature>
<feature type="region of interest" description="Disordered" evidence="3">
    <location>
        <begin position="645"/>
        <end position="672"/>
    </location>
</feature>
<feature type="region of interest" description="Disordered" evidence="3">
    <location>
        <begin position="1019"/>
        <end position="1050"/>
    </location>
</feature>
<feature type="compositionally biased region" description="Basic and acidic residues" evidence="3">
    <location>
        <begin position="650"/>
        <end position="669"/>
    </location>
</feature>
<feature type="glycosylation site" description="N-linked (GlcNAc...) asparagine" evidence="2">
    <location>
        <position position="288"/>
    </location>
</feature>
<feature type="glycosylation site" description="N-linked (GlcNAc...) asparagine" evidence="2">
    <location>
        <position position="974"/>
    </location>
</feature>
<feature type="glycosylation site" description="N-linked (GlcNAc...) asparagine" evidence="2">
    <location>
        <position position="1018"/>
    </location>
</feature>
<feature type="glycosylation site" description="N-linked (GlcNAc...) asparagine" evidence="2">
    <location>
        <position position="1269"/>
    </location>
</feature>